<reference key="1">
    <citation type="journal article" date="2007" name="Genome Biol.">
        <title>Comparison of Francisella tularensis genomes reveals evolutionary events associated with the emergence of human pathogenic strains.</title>
        <authorList>
            <person name="Rohmer L."/>
            <person name="Fong C."/>
            <person name="Abmayr S."/>
            <person name="Wasnick M."/>
            <person name="Larson Freeman T.J."/>
            <person name="Radey M."/>
            <person name="Guina T."/>
            <person name="Svensson K."/>
            <person name="Hayden H.S."/>
            <person name="Jacobs M."/>
            <person name="Gallagher L.A."/>
            <person name="Manoil C."/>
            <person name="Ernst R.K."/>
            <person name="Drees B."/>
            <person name="Buckley D."/>
            <person name="Haugen E."/>
            <person name="Bovee D."/>
            <person name="Zhou Y."/>
            <person name="Chang J."/>
            <person name="Levy R."/>
            <person name="Lim R."/>
            <person name="Gillett W."/>
            <person name="Guenthener D."/>
            <person name="Kang A."/>
            <person name="Shaffer S.A."/>
            <person name="Taylor G."/>
            <person name="Chen J."/>
            <person name="Gallis B."/>
            <person name="D'Argenio D.A."/>
            <person name="Forsman M."/>
            <person name="Olson M.V."/>
            <person name="Goodlett D.R."/>
            <person name="Kaul R."/>
            <person name="Miller S.I."/>
            <person name="Brittnacher M.J."/>
        </authorList>
    </citation>
    <scope>NUCLEOTIDE SEQUENCE [LARGE SCALE GENOMIC DNA]</scope>
    <source>
        <strain>U112</strain>
    </source>
</reference>
<comment type="function">
    <text evidence="1">Part of the high-affinity ATP-driven potassium transport (or Kdp) system, which catalyzes the hydrolysis of ATP coupled with the electrogenic transport of potassium into the cytoplasm. This subunit binds the periplasmic potassium ions and delivers the ions to the membrane domain of KdpB through an intramembrane tunnel.</text>
</comment>
<comment type="subunit">
    <text evidence="1">The system is composed of three essential subunits: KdpA, KdpB and KdpC.</text>
</comment>
<comment type="subcellular location">
    <subcellularLocation>
        <location evidence="1">Cell inner membrane</location>
        <topology evidence="1">Multi-pass membrane protein</topology>
    </subcellularLocation>
</comment>
<comment type="similarity">
    <text evidence="1">Belongs to the KdpA family.</text>
</comment>
<dbReference type="EMBL" id="CP000439">
    <property type="protein sequence ID" value="ABK90575.1"/>
    <property type="molecule type" value="Genomic_DNA"/>
</dbReference>
<dbReference type="RefSeq" id="WP_003041406.1">
    <property type="nucleotide sequence ID" value="NC_008601.1"/>
</dbReference>
<dbReference type="SMR" id="A0Q8L0"/>
<dbReference type="KEGG" id="ftn:FTN_1718"/>
<dbReference type="KEGG" id="ftx:AW25_270"/>
<dbReference type="BioCyc" id="FTUL401614:G1G75-1779-MONOMER"/>
<dbReference type="Proteomes" id="UP000000762">
    <property type="component" value="Chromosome"/>
</dbReference>
<dbReference type="GO" id="GO:0005886">
    <property type="term" value="C:plasma membrane"/>
    <property type="evidence" value="ECO:0007669"/>
    <property type="project" value="UniProtKB-SubCell"/>
</dbReference>
<dbReference type="GO" id="GO:0008556">
    <property type="term" value="F:P-type potassium transmembrane transporter activity"/>
    <property type="evidence" value="ECO:0007669"/>
    <property type="project" value="InterPro"/>
</dbReference>
<dbReference type="GO" id="GO:0030955">
    <property type="term" value="F:potassium ion binding"/>
    <property type="evidence" value="ECO:0007669"/>
    <property type="project" value="UniProtKB-UniRule"/>
</dbReference>
<dbReference type="HAMAP" id="MF_00275">
    <property type="entry name" value="KdpA"/>
    <property type="match status" value="1"/>
</dbReference>
<dbReference type="InterPro" id="IPR004623">
    <property type="entry name" value="KdpA"/>
</dbReference>
<dbReference type="NCBIfam" id="TIGR00680">
    <property type="entry name" value="kdpA"/>
    <property type="match status" value="1"/>
</dbReference>
<dbReference type="PANTHER" id="PTHR30607">
    <property type="entry name" value="POTASSIUM-TRANSPORTING ATPASE A CHAIN"/>
    <property type="match status" value="1"/>
</dbReference>
<dbReference type="PANTHER" id="PTHR30607:SF2">
    <property type="entry name" value="POTASSIUM-TRANSPORTING ATPASE POTASSIUM-BINDING SUBUNIT"/>
    <property type="match status" value="1"/>
</dbReference>
<dbReference type="Pfam" id="PF03814">
    <property type="entry name" value="KdpA"/>
    <property type="match status" value="1"/>
</dbReference>
<dbReference type="PIRSF" id="PIRSF001294">
    <property type="entry name" value="K_ATPaseA"/>
    <property type="match status" value="1"/>
</dbReference>
<name>KDPA_FRATN</name>
<proteinExistence type="inferred from homology"/>
<gene>
    <name evidence="1" type="primary">kdpA</name>
    <name type="ordered locus">FTN_1718</name>
</gene>
<feature type="chain" id="PRO_1000119345" description="Potassium-transporting ATPase potassium-binding subunit">
    <location>
        <begin position="1"/>
        <end position="573"/>
    </location>
</feature>
<feature type="transmembrane region" description="Helical" evidence="1">
    <location>
        <begin position="6"/>
        <end position="26"/>
    </location>
</feature>
<feature type="transmembrane region" description="Helical" evidence="1">
    <location>
        <begin position="66"/>
        <end position="86"/>
    </location>
</feature>
<feature type="transmembrane region" description="Helical" evidence="1">
    <location>
        <begin position="135"/>
        <end position="155"/>
    </location>
</feature>
<feature type="transmembrane region" description="Helical" evidence="1">
    <location>
        <begin position="177"/>
        <end position="197"/>
    </location>
</feature>
<feature type="transmembrane region" description="Helical" evidence="1">
    <location>
        <begin position="257"/>
        <end position="277"/>
    </location>
</feature>
<feature type="transmembrane region" description="Helical" evidence="1">
    <location>
        <begin position="283"/>
        <end position="303"/>
    </location>
</feature>
<feature type="transmembrane region" description="Helical" evidence="1">
    <location>
        <begin position="382"/>
        <end position="402"/>
    </location>
</feature>
<feature type="transmembrane region" description="Helical" evidence="1">
    <location>
        <begin position="428"/>
        <end position="448"/>
    </location>
</feature>
<feature type="transmembrane region" description="Helical" evidence="1">
    <location>
        <begin position="493"/>
        <end position="513"/>
    </location>
</feature>
<feature type="transmembrane region" description="Helical" evidence="1">
    <location>
        <begin position="537"/>
        <end position="557"/>
    </location>
</feature>
<protein>
    <recommendedName>
        <fullName evidence="1">Potassium-transporting ATPase potassium-binding subunit</fullName>
    </recommendedName>
    <alternativeName>
        <fullName evidence="1">ATP phosphohydrolase [potassium-transporting] A chain</fullName>
    </alternativeName>
    <alternativeName>
        <fullName evidence="1">Potassium-binding and translocating subunit A</fullName>
    </alternativeName>
    <alternativeName>
        <fullName evidence="1">Potassium-translocating ATPase A chain</fullName>
    </alternativeName>
</protein>
<sequence length="573" mass="62313">MISNFILFALFIVTIALITKPLGSYIFRVFNNERTYLDWLAKPFQRVYLLVLGESSKKEQTAKAYFFSLVSFSVMAFIFVLVILLLQGILPLNPQEIKGMSFPQALNTAVSFITNTNWQSYSGETDVSYFAQMLALAVQNFVSAAVGLCVAIALIRSVARHETATIGNFWNDLGKGIFWILLPISIVIAIVYIFQGVPQNVMAYLHVHTLAGTEQIIPQGPIASQEAIKSLGTNGGGFFNANSAHPYENPTVITNYIQMVSIFAIAAALTYTFGKWVGNTKQGWLIFGVMLVLFIISLVVMTISELHGLDFLHSKDIQDIYGQVGHLSNMEGKESRFGVFYSTLYNTVSTSASDGGVNSVLDSYSPLAGMMAMLNMAIGEVIFGGVGAGFYGFFMFLMLAVFIGSLMIGRAPSFLGKRIEANDMKWTMFALLISPCCVLVFTGLAAVIPSVHQALTNSGAHGFSEILYAYISGANNNGSAFAGLSANTNYLNITIALSMLIGRFGVIFAVIMLAGSLVKKKRSLQMSEISSLDTTSFIFAILVFFTILLIGGLTIFPALGLGPILDQLNLNFL</sequence>
<evidence type="ECO:0000255" key="1">
    <source>
        <dbReference type="HAMAP-Rule" id="MF_00275"/>
    </source>
</evidence>
<organism>
    <name type="scientific">Francisella tularensis subsp. novicida (strain U112)</name>
    <dbReference type="NCBI Taxonomy" id="401614"/>
    <lineage>
        <taxon>Bacteria</taxon>
        <taxon>Pseudomonadati</taxon>
        <taxon>Pseudomonadota</taxon>
        <taxon>Gammaproteobacteria</taxon>
        <taxon>Thiotrichales</taxon>
        <taxon>Francisellaceae</taxon>
        <taxon>Francisella</taxon>
    </lineage>
</organism>
<keyword id="KW-0997">Cell inner membrane</keyword>
<keyword id="KW-1003">Cell membrane</keyword>
<keyword id="KW-0406">Ion transport</keyword>
<keyword id="KW-0472">Membrane</keyword>
<keyword id="KW-0630">Potassium</keyword>
<keyword id="KW-0633">Potassium transport</keyword>
<keyword id="KW-0812">Transmembrane</keyword>
<keyword id="KW-1133">Transmembrane helix</keyword>
<keyword id="KW-0813">Transport</keyword>
<accession>A0Q8L0</accession>